<keyword id="KW-1003">Cell membrane</keyword>
<keyword id="KW-0406">Ion transport</keyword>
<keyword id="KW-0472">Membrane</keyword>
<keyword id="KW-0915">Sodium</keyword>
<keyword id="KW-0739">Sodium transport</keyword>
<keyword id="KW-0769">Symport</keyword>
<keyword id="KW-0812">Transmembrane</keyword>
<keyword id="KW-1133">Transmembrane helix</keyword>
<keyword id="KW-0813">Transport</keyword>
<organism>
    <name type="scientific">Staphylococcus aureus (strain Mu50 / ATCC 700699)</name>
    <dbReference type="NCBI Taxonomy" id="158878"/>
    <lineage>
        <taxon>Bacteria</taxon>
        <taxon>Bacillati</taxon>
        <taxon>Bacillota</taxon>
        <taxon>Bacilli</taxon>
        <taxon>Bacillales</taxon>
        <taxon>Staphylococcaceae</taxon>
        <taxon>Staphylococcus</taxon>
    </lineage>
</organism>
<comment type="function">
    <text evidence="2 3">Mediates the transport of the dicarboxylates fumarate, malate, and succinate across the cytoplasmic membrane via a Na(+)-electrochemical gradient. Transports 2 Na(+) for each dicarboxylate.</text>
</comment>
<comment type="biophysicochemical properties">
    <kinetics>
        <KM evidence="2 3">15 uM for fumarate (in the presence of 5 mM Na(+))</KM>
        <KM evidence="2 3">8.1 uM for malate (in the presence of 5 mM Na(+))</KM>
        <KM evidence="2 3">4.5 uM for succinate</KM>
        <KM evidence="2 3">12 uM for succinate (in the presence of saturating concentrations of Na(+))</KM>
        <KM evidence="2 3">2.7 mM for Na(+)</KM>
        <Vmax evidence="2 3">16.0 nmol/min/mg enzyme toward fumarate (in the presence of 5 mM Na(+))</Vmax>
        <Vmax evidence="2 3">12.0 nmol/min/mg enzyme toward malate (in the presence of 5 mM Na(+))</Vmax>
        <Vmax evidence="2 3">17.0 nmol/min/mg enzyme toward succinate (in the presence of 5 mM Na(+))</Vmax>
        <Vmax evidence="2 3">1.8 umol/min/mg enzyme toward succinate (in the presence of saturating concentrations of Na(+))</Vmax>
    </kinetics>
</comment>
<comment type="subcellular location">
    <subcellularLocation>
        <location evidence="4">Cell membrane</location>
        <topology evidence="4">Multi-pass membrane protein</topology>
    </subcellularLocation>
</comment>
<comment type="miscellaneous">
    <text>The binding of Na(+) at the extracellular surface probably precedes the binding of dicarboxylate, since there is a competitive activation of succinate transport by Na(+) and an uncompetitive nature of succinate on Na(+) affinity.</text>
</comment>
<comment type="similarity">
    <text evidence="4">Belongs to the SLC13A/DASS transporter (TC 2.A.47) family. NADC subfamily.</text>
</comment>
<dbReference type="EMBL" id="BA000017">
    <property type="protein sequence ID" value="BAB58078.1"/>
    <property type="molecule type" value="Genomic_DNA"/>
</dbReference>
<dbReference type="RefSeq" id="WP_000323161.1">
    <property type="nucleotide sequence ID" value="NC_002758.2"/>
</dbReference>
<dbReference type="SMR" id="Q99SX1"/>
<dbReference type="KEGG" id="sav:SAV1916"/>
<dbReference type="HOGENOM" id="CLU_005170_0_0_9"/>
<dbReference type="PhylomeDB" id="Q99SX1"/>
<dbReference type="SABIO-RK" id="Q99SX1"/>
<dbReference type="Proteomes" id="UP000002481">
    <property type="component" value="Chromosome"/>
</dbReference>
<dbReference type="GO" id="GO:0005886">
    <property type="term" value="C:plasma membrane"/>
    <property type="evidence" value="ECO:0007669"/>
    <property type="project" value="UniProtKB-SubCell"/>
</dbReference>
<dbReference type="GO" id="GO:0008514">
    <property type="term" value="F:organic anion transmembrane transporter activity"/>
    <property type="evidence" value="ECO:0007669"/>
    <property type="project" value="UniProtKB-ARBA"/>
</dbReference>
<dbReference type="GO" id="GO:0015293">
    <property type="term" value="F:symporter activity"/>
    <property type="evidence" value="ECO:0007669"/>
    <property type="project" value="UniProtKB-KW"/>
</dbReference>
<dbReference type="GO" id="GO:1905039">
    <property type="term" value="P:carboxylic acid transmembrane transport"/>
    <property type="evidence" value="ECO:0007669"/>
    <property type="project" value="UniProtKB-ARBA"/>
</dbReference>
<dbReference type="GO" id="GO:0006814">
    <property type="term" value="P:sodium ion transport"/>
    <property type="evidence" value="ECO:0007669"/>
    <property type="project" value="UniProtKB-KW"/>
</dbReference>
<dbReference type="CDD" id="cd01115">
    <property type="entry name" value="SLC13_permease"/>
    <property type="match status" value="1"/>
</dbReference>
<dbReference type="InterPro" id="IPR001898">
    <property type="entry name" value="SLC13A/DASS"/>
</dbReference>
<dbReference type="NCBIfam" id="TIGR00785">
    <property type="entry name" value="dass"/>
    <property type="match status" value="1"/>
</dbReference>
<dbReference type="PANTHER" id="PTHR10283">
    <property type="entry name" value="SOLUTE CARRIER FAMILY 13 MEMBER"/>
    <property type="match status" value="1"/>
</dbReference>
<dbReference type="PANTHER" id="PTHR10283:SF82">
    <property type="entry name" value="SOLUTE CARRIER FAMILY 13 MEMBER 2"/>
    <property type="match status" value="1"/>
</dbReference>
<dbReference type="Pfam" id="PF00939">
    <property type="entry name" value="Na_sulph_symp"/>
    <property type="match status" value="1"/>
</dbReference>
<reference key="1">
    <citation type="journal article" date="2001" name="Lancet">
        <title>Whole genome sequencing of meticillin-resistant Staphylococcus aureus.</title>
        <authorList>
            <person name="Kuroda M."/>
            <person name="Ohta T."/>
            <person name="Uchiyama I."/>
            <person name="Baba T."/>
            <person name="Yuzawa H."/>
            <person name="Kobayashi I."/>
            <person name="Cui L."/>
            <person name="Oguchi A."/>
            <person name="Aoki K."/>
            <person name="Nagai Y."/>
            <person name="Lian J.-Q."/>
            <person name="Ito T."/>
            <person name="Kanamori M."/>
            <person name="Matsumaru H."/>
            <person name="Maruyama A."/>
            <person name="Murakami H."/>
            <person name="Hosoyama A."/>
            <person name="Mizutani-Ui Y."/>
            <person name="Takahashi N.K."/>
            <person name="Sawano T."/>
            <person name="Inoue R."/>
            <person name="Kaito C."/>
            <person name="Sekimizu K."/>
            <person name="Hirakawa H."/>
            <person name="Kuhara S."/>
            <person name="Goto S."/>
            <person name="Yabuzaki J."/>
            <person name="Kanehisa M."/>
            <person name="Yamashita A."/>
            <person name="Oshima K."/>
            <person name="Furuya K."/>
            <person name="Yoshino C."/>
            <person name="Shiba T."/>
            <person name="Hattori M."/>
            <person name="Ogasawara N."/>
            <person name="Hayashi H."/>
            <person name="Hiramatsu K."/>
        </authorList>
    </citation>
    <scope>NUCLEOTIDE SEQUENCE [LARGE SCALE GENOMIC DNA]</scope>
    <source>
        <strain>Mu50 / ATCC 700699</strain>
    </source>
</reference>
<reference key="2">
    <citation type="journal article" date="2005" name="J. Bacteriol.">
        <title>Functional characterization of a Na(+)-coupled dicarboxylate carrier protein from Staphylococcus aureus.</title>
        <authorList>
            <person name="Hall J.A."/>
            <person name="Pajor A.M."/>
        </authorList>
    </citation>
    <scope>FUNCTION</scope>
    <scope>BIOPHYSICOCHEMICAL PROPERTIES</scope>
</reference>
<reference key="3">
    <citation type="journal article" date="2007" name="J. Bacteriol.">
        <title>Functional reconstitution of SdcS, a Na+-coupled dicarboxylate carrier protein from Staphylococcus aureus.</title>
        <authorList>
            <person name="Hall J.A."/>
            <person name="Pajor A.M."/>
        </authorList>
    </citation>
    <scope>FUNCTION</scope>
    <scope>BIOPHYSICOCHEMICAL PROPERTIES</scope>
</reference>
<protein>
    <recommendedName>
        <fullName>Sodium-dependent dicarboxylate transporter SdcS</fullName>
    </recommendedName>
    <alternativeName>
        <fullName>Na(+)/dicarboxylate symporter</fullName>
    </alternativeName>
</protein>
<name>SDCS_STAAM</name>
<proteinExistence type="evidence at protein level"/>
<sequence length="520" mass="57172">MAYFNQHQSMISKRYLTFFSKSKKKKPFSAGQLIGLILGPLLFLLTLLFFHPQDLPWKGVYVLAITLWIATWWITEAIPIAATSLLPIVLLPLGHILTPEQVSSEYGNDIIFLFLGGFILAIAMERWNLHTRVALTIINLIGASTSKILLGFMVATGFLSMFVSNTAAVMIMIPIGLAIIKEAHDLQEANTNQTSIQKFEKSLVLAIGYAGTIGGLGTLIGTPPLIILKGQYMQHFGHEISFAKWMIVGIPTVIVLLGITWLYLRYVAFRHDLKYLPGGQTLIKQKLDELGKMKYEEKVVQTIFVLASLLWITREFLLKKWEVTSSVADGTIAIFISILLFIIPAKNTEKHRRIIDWEVAKELPWGVLILFGGGLALAKGISESGLAKWLGEQLKSLNGVSPILIVIVITIFVLFLTEVTSNTATATMILPILATLSVAVGVHPLLLMAPAAMAANCAYMLPVGTPPNAIIFGSGKISIKQMASVGFWVNLISAIIIILVVYYVMPIVLGIDINQPLPLK</sequence>
<feature type="chain" id="PRO_0000260095" description="Sodium-dependent dicarboxylate transporter SdcS">
    <location>
        <begin position="1"/>
        <end position="520"/>
    </location>
</feature>
<feature type="transmembrane region" description="Helical" evidence="1">
    <location>
        <begin position="30"/>
        <end position="50"/>
    </location>
</feature>
<feature type="transmembrane region" description="Helical" evidence="1">
    <location>
        <begin position="55"/>
        <end position="75"/>
    </location>
</feature>
<feature type="transmembrane region" description="Helical" evidence="1">
    <location>
        <begin position="77"/>
        <end position="97"/>
    </location>
</feature>
<feature type="transmembrane region" description="Helical" evidence="1">
    <location>
        <begin position="104"/>
        <end position="124"/>
    </location>
</feature>
<feature type="transmembrane region" description="Helical" evidence="1">
    <location>
        <begin position="160"/>
        <end position="180"/>
    </location>
</feature>
<feature type="transmembrane region" description="Helical" evidence="1">
    <location>
        <begin position="207"/>
        <end position="227"/>
    </location>
</feature>
<feature type="transmembrane region" description="Helical" evidence="1">
    <location>
        <begin position="242"/>
        <end position="262"/>
    </location>
</feature>
<feature type="transmembrane region" description="Helical" evidence="1">
    <location>
        <begin position="298"/>
        <end position="318"/>
    </location>
</feature>
<feature type="transmembrane region" description="Helical" evidence="1">
    <location>
        <begin position="323"/>
        <end position="343"/>
    </location>
</feature>
<feature type="transmembrane region" description="Helical" evidence="1">
    <location>
        <begin position="362"/>
        <end position="382"/>
    </location>
</feature>
<feature type="transmembrane region" description="Helical" evidence="1">
    <location>
        <begin position="399"/>
        <end position="419"/>
    </location>
</feature>
<feature type="transmembrane region" description="Helical" evidence="1">
    <location>
        <begin position="428"/>
        <end position="448"/>
    </location>
</feature>
<feature type="transmembrane region" description="Helical" evidence="1">
    <location>
        <begin position="452"/>
        <end position="472"/>
    </location>
</feature>
<feature type="transmembrane region" description="Helical" evidence="1">
    <location>
        <begin position="491"/>
        <end position="511"/>
    </location>
</feature>
<evidence type="ECO:0000255" key="1"/>
<evidence type="ECO:0000269" key="2">
    <source>
    </source>
</evidence>
<evidence type="ECO:0000269" key="3">
    <source>
    </source>
</evidence>
<evidence type="ECO:0000305" key="4"/>
<gene>
    <name type="primary">sdcS</name>
    <name type="ordered locus">SAV1916</name>
</gene>
<accession>Q99SX1</accession>